<comment type="function">
    <text evidence="1">Bifunctional serine/threonine kinase and phosphorylase involved in the regulation of the pyruvate, phosphate dikinase (PPDK) by catalyzing its phosphorylation/dephosphorylation.</text>
</comment>
<comment type="catalytic activity">
    <reaction evidence="1">
        <text>N(tele)-phospho-L-histidyl/L-threonyl-[pyruvate, phosphate dikinase] + ADP = N(tele)-phospho-L-histidyl/O-phospho-L-threonyl-[pyruvate, phosphate dikinase] + AMP + H(+)</text>
        <dbReference type="Rhea" id="RHEA:43692"/>
        <dbReference type="Rhea" id="RHEA-COMP:10650"/>
        <dbReference type="Rhea" id="RHEA-COMP:10651"/>
        <dbReference type="ChEBI" id="CHEBI:15378"/>
        <dbReference type="ChEBI" id="CHEBI:30013"/>
        <dbReference type="ChEBI" id="CHEBI:61977"/>
        <dbReference type="ChEBI" id="CHEBI:83586"/>
        <dbReference type="ChEBI" id="CHEBI:456215"/>
        <dbReference type="ChEBI" id="CHEBI:456216"/>
        <dbReference type="EC" id="2.7.11.32"/>
    </reaction>
</comment>
<comment type="catalytic activity">
    <reaction evidence="1">
        <text>N(tele)-phospho-L-histidyl/O-phospho-L-threonyl-[pyruvate, phosphate dikinase] + phosphate + H(+) = N(tele)-phospho-L-histidyl/L-threonyl-[pyruvate, phosphate dikinase] + diphosphate</text>
        <dbReference type="Rhea" id="RHEA:43696"/>
        <dbReference type="Rhea" id="RHEA-COMP:10650"/>
        <dbReference type="Rhea" id="RHEA-COMP:10651"/>
        <dbReference type="ChEBI" id="CHEBI:15378"/>
        <dbReference type="ChEBI" id="CHEBI:30013"/>
        <dbReference type="ChEBI" id="CHEBI:33019"/>
        <dbReference type="ChEBI" id="CHEBI:43474"/>
        <dbReference type="ChEBI" id="CHEBI:61977"/>
        <dbReference type="ChEBI" id="CHEBI:83586"/>
        <dbReference type="EC" id="2.7.4.27"/>
    </reaction>
</comment>
<comment type="similarity">
    <text evidence="1">Belongs to the pyruvate, phosphate/water dikinase regulatory protein family. PDRP subfamily.</text>
</comment>
<organism>
    <name type="scientific">Lactobacillus johnsonii (strain CNCM I-12250 / La1 / NCC 533)</name>
    <dbReference type="NCBI Taxonomy" id="257314"/>
    <lineage>
        <taxon>Bacteria</taxon>
        <taxon>Bacillati</taxon>
        <taxon>Bacillota</taxon>
        <taxon>Bacilli</taxon>
        <taxon>Lactobacillales</taxon>
        <taxon>Lactobacillaceae</taxon>
        <taxon>Lactobacillus</taxon>
    </lineage>
</organism>
<reference key="1">
    <citation type="journal article" date="2004" name="Proc. Natl. Acad. Sci. U.S.A.">
        <title>The genome sequence of the probiotic intestinal bacterium Lactobacillus johnsonii NCC 533.</title>
        <authorList>
            <person name="Pridmore R.D."/>
            <person name="Berger B."/>
            <person name="Desiere F."/>
            <person name="Vilanova D."/>
            <person name="Barretto C."/>
            <person name="Pittet A.-C."/>
            <person name="Zwahlen M.-C."/>
            <person name="Rouvet M."/>
            <person name="Altermann E."/>
            <person name="Barrangou R."/>
            <person name="Mollet B."/>
            <person name="Mercenier A."/>
            <person name="Klaenhammer T."/>
            <person name="Arigoni F."/>
            <person name="Schell M.A."/>
        </authorList>
    </citation>
    <scope>NUCLEOTIDE SEQUENCE [LARGE SCALE GENOMIC DNA]</scope>
    <source>
        <strain>CNCM I-1225 / La1 / NCC 533</strain>
    </source>
</reference>
<feature type="chain" id="PRO_0000196666" description="Putative pyruvate, phosphate dikinase regulatory protein">
    <location>
        <begin position="1"/>
        <end position="280"/>
    </location>
</feature>
<feature type="binding site" evidence="1">
    <location>
        <begin position="158"/>
        <end position="165"/>
    </location>
    <ligand>
        <name>ADP</name>
        <dbReference type="ChEBI" id="CHEBI:456216"/>
    </ligand>
</feature>
<dbReference type="EC" id="2.7.11.32" evidence="1"/>
<dbReference type="EC" id="2.7.4.27" evidence="1"/>
<dbReference type="EMBL" id="AE017198">
    <property type="protein sequence ID" value="AAS09147.1"/>
    <property type="molecule type" value="Genomic_DNA"/>
</dbReference>
<dbReference type="RefSeq" id="WP_011162143.1">
    <property type="nucleotide sequence ID" value="NC_005362.1"/>
</dbReference>
<dbReference type="SMR" id="Q74IY4"/>
<dbReference type="KEGG" id="ljo:LJ_1326"/>
<dbReference type="eggNOG" id="COG1806">
    <property type="taxonomic scope" value="Bacteria"/>
</dbReference>
<dbReference type="HOGENOM" id="CLU_046206_2_1_9"/>
<dbReference type="Proteomes" id="UP000000581">
    <property type="component" value="Chromosome"/>
</dbReference>
<dbReference type="GO" id="GO:0043531">
    <property type="term" value="F:ADP binding"/>
    <property type="evidence" value="ECO:0007669"/>
    <property type="project" value="UniProtKB-UniRule"/>
</dbReference>
<dbReference type="GO" id="GO:0005524">
    <property type="term" value="F:ATP binding"/>
    <property type="evidence" value="ECO:0007669"/>
    <property type="project" value="InterPro"/>
</dbReference>
<dbReference type="GO" id="GO:0016776">
    <property type="term" value="F:phosphotransferase activity, phosphate group as acceptor"/>
    <property type="evidence" value="ECO:0007669"/>
    <property type="project" value="UniProtKB-UniRule"/>
</dbReference>
<dbReference type="GO" id="GO:0004674">
    <property type="term" value="F:protein serine/threonine kinase activity"/>
    <property type="evidence" value="ECO:0007669"/>
    <property type="project" value="UniProtKB-UniRule"/>
</dbReference>
<dbReference type="HAMAP" id="MF_00921">
    <property type="entry name" value="PDRP"/>
    <property type="match status" value="1"/>
</dbReference>
<dbReference type="InterPro" id="IPR005177">
    <property type="entry name" value="Kinase-pyrophosphorylase"/>
</dbReference>
<dbReference type="InterPro" id="IPR027417">
    <property type="entry name" value="P-loop_NTPase"/>
</dbReference>
<dbReference type="InterPro" id="IPR026565">
    <property type="entry name" value="PPDK_reg"/>
</dbReference>
<dbReference type="NCBIfam" id="NF003742">
    <property type="entry name" value="PRK05339.1"/>
    <property type="match status" value="1"/>
</dbReference>
<dbReference type="PANTHER" id="PTHR31756">
    <property type="entry name" value="PYRUVATE, PHOSPHATE DIKINASE REGULATORY PROTEIN 1, CHLOROPLASTIC"/>
    <property type="match status" value="1"/>
</dbReference>
<dbReference type="PANTHER" id="PTHR31756:SF3">
    <property type="entry name" value="PYRUVATE, PHOSPHATE DIKINASE REGULATORY PROTEIN 1, CHLOROPLASTIC"/>
    <property type="match status" value="1"/>
</dbReference>
<dbReference type="Pfam" id="PF03618">
    <property type="entry name" value="Kinase-PPPase"/>
    <property type="match status" value="1"/>
</dbReference>
<dbReference type="SUPFAM" id="SSF52540">
    <property type="entry name" value="P-loop containing nucleoside triphosphate hydrolases"/>
    <property type="match status" value="1"/>
</dbReference>
<sequence>MTEEKKENQKIVNLIIISDSVGDTAFNMVQAGAVQYPNVKFNYRRYPFITNREKLEKVFSEITEFENVLIAFTLIHEDEQLAVIKFAREHNMKYVDLLSGVIDNIHALTGEEPKHEIGAVHHMGQNYFDRISAMEFAVMYDDGKDPKGFLEADVVLLGVSRTSKTPLSLFLANKNLKVANLPLVPQTHIPDEIYKINPKKIIGLTNDPSVLNEIRRQRMIAYGLNPDTTYSNMDSINAELEAADKLYKKLGCYVINVAHRSIEETAALILEHLGIDDYAK</sequence>
<evidence type="ECO:0000255" key="1">
    <source>
        <dbReference type="HAMAP-Rule" id="MF_00921"/>
    </source>
</evidence>
<protein>
    <recommendedName>
        <fullName evidence="1">Putative pyruvate, phosphate dikinase regulatory protein</fullName>
        <shortName evidence="1">PPDK regulatory protein</shortName>
        <ecNumber evidence="1">2.7.11.32</ecNumber>
        <ecNumber evidence="1">2.7.4.27</ecNumber>
    </recommendedName>
</protein>
<accession>Q74IY4</accession>
<name>PDRP_LACJO</name>
<keyword id="KW-0418">Kinase</keyword>
<keyword id="KW-0547">Nucleotide-binding</keyword>
<keyword id="KW-0723">Serine/threonine-protein kinase</keyword>
<keyword id="KW-0808">Transferase</keyword>
<gene>
    <name type="ordered locus">LJ_1326</name>
</gene>
<proteinExistence type="inferred from homology"/>